<proteinExistence type="inferred from homology"/>
<evidence type="ECO:0000255" key="1">
    <source>
        <dbReference type="HAMAP-Rule" id="MF_00176"/>
    </source>
</evidence>
<accession>B3PNG9</accession>
<keyword id="KW-0030">Aminoacyl-tRNA synthetase</keyword>
<keyword id="KW-0067">ATP-binding</keyword>
<keyword id="KW-0963">Cytoplasm</keyword>
<keyword id="KW-0436">Ligase</keyword>
<keyword id="KW-0547">Nucleotide-binding</keyword>
<keyword id="KW-0648">Protein biosynthesis</keyword>
<keyword id="KW-1185">Reference proteome</keyword>
<comment type="function">
    <text evidence="1">Catalyzes the attachment of serine to tRNA(Ser). Is also able to aminoacylate tRNA(Sec) with serine, to form the misacylated tRNA L-seryl-tRNA(Sec), which will be further converted into selenocysteinyl-tRNA(Sec).</text>
</comment>
<comment type="catalytic activity">
    <reaction evidence="1">
        <text>tRNA(Ser) + L-serine + ATP = L-seryl-tRNA(Ser) + AMP + diphosphate + H(+)</text>
        <dbReference type="Rhea" id="RHEA:12292"/>
        <dbReference type="Rhea" id="RHEA-COMP:9669"/>
        <dbReference type="Rhea" id="RHEA-COMP:9703"/>
        <dbReference type="ChEBI" id="CHEBI:15378"/>
        <dbReference type="ChEBI" id="CHEBI:30616"/>
        <dbReference type="ChEBI" id="CHEBI:33019"/>
        <dbReference type="ChEBI" id="CHEBI:33384"/>
        <dbReference type="ChEBI" id="CHEBI:78442"/>
        <dbReference type="ChEBI" id="CHEBI:78533"/>
        <dbReference type="ChEBI" id="CHEBI:456215"/>
        <dbReference type="EC" id="6.1.1.11"/>
    </reaction>
</comment>
<comment type="catalytic activity">
    <reaction evidence="1">
        <text>tRNA(Sec) + L-serine + ATP = L-seryl-tRNA(Sec) + AMP + diphosphate + H(+)</text>
        <dbReference type="Rhea" id="RHEA:42580"/>
        <dbReference type="Rhea" id="RHEA-COMP:9742"/>
        <dbReference type="Rhea" id="RHEA-COMP:10128"/>
        <dbReference type="ChEBI" id="CHEBI:15378"/>
        <dbReference type="ChEBI" id="CHEBI:30616"/>
        <dbReference type="ChEBI" id="CHEBI:33019"/>
        <dbReference type="ChEBI" id="CHEBI:33384"/>
        <dbReference type="ChEBI" id="CHEBI:78442"/>
        <dbReference type="ChEBI" id="CHEBI:78533"/>
        <dbReference type="ChEBI" id="CHEBI:456215"/>
        <dbReference type="EC" id="6.1.1.11"/>
    </reaction>
</comment>
<comment type="pathway">
    <text evidence="1">Aminoacyl-tRNA biosynthesis; selenocysteinyl-tRNA(Sec) biosynthesis; L-seryl-tRNA(Sec) from L-serine and tRNA(Sec): step 1/1.</text>
</comment>
<comment type="subunit">
    <text evidence="1">Homodimer. The tRNA molecule binds across the dimer.</text>
</comment>
<comment type="subcellular location">
    <subcellularLocation>
        <location evidence="1">Cytoplasm</location>
    </subcellularLocation>
</comment>
<comment type="domain">
    <text evidence="1">Consists of two distinct domains, a catalytic core and a N-terminal extension that is involved in tRNA binding.</text>
</comment>
<comment type="similarity">
    <text evidence="1">Belongs to the class-II aminoacyl-tRNA synthetase family. Type-1 seryl-tRNA synthetase subfamily.</text>
</comment>
<dbReference type="EC" id="6.1.1.11" evidence="1"/>
<dbReference type="EMBL" id="CP001047">
    <property type="protein sequence ID" value="ACF07571.1"/>
    <property type="molecule type" value="Genomic_DNA"/>
</dbReference>
<dbReference type="RefSeq" id="WP_012498528.1">
    <property type="nucleotide sequence ID" value="NC_011025.1"/>
</dbReference>
<dbReference type="SMR" id="B3PNG9"/>
<dbReference type="STRING" id="243272.MARTH_orf851"/>
<dbReference type="KEGG" id="mat:MARTH_orf851"/>
<dbReference type="eggNOG" id="COG0172">
    <property type="taxonomic scope" value="Bacteria"/>
</dbReference>
<dbReference type="HOGENOM" id="CLU_023797_1_1_14"/>
<dbReference type="UniPathway" id="UPA00906">
    <property type="reaction ID" value="UER00895"/>
</dbReference>
<dbReference type="Proteomes" id="UP000008812">
    <property type="component" value="Chromosome"/>
</dbReference>
<dbReference type="GO" id="GO:0005737">
    <property type="term" value="C:cytoplasm"/>
    <property type="evidence" value="ECO:0007669"/>
    <property type="project" value="UniProtKB-SubCell"/>
</dbReference>
<dbReference type="GO" id="GO:0005524">
    <property type="term" value="F:ATP binding"/>
    <property type="evidence" value="ECO:0007669"/>
    <property type="project" value="UniProtKB-UniRule"/>
</dbReference>
<dbReference type="GO" id="GO:0004828">
    <property type="term" value="F:serine-tRNA ligase activity"/>
    <property type="evidence" value="ECO:0007669"/>
    <property type="project" value="UniProtKB-UniRule"/>
</dbReference>
<dbReference type="GO" id="GO:0016260">
    <property type="term" value="P:selenocysteine biosynthetic process"/>
    <property type="evidence" value="ECO:0007669"/>
    <property type="project" value="UniProtKB-UniRule"/>
</dbReference>
<dbReference type="GO" id="GO:0006434">
    <property type="term" value="P:seryl-tRNA aminoacylation"/>
    <property type="evidence" value="ECO:0007669"/>
    <property type="project" value="UniProtKB-UniRule"/>
</dbReference>
<dbReference type="CDD" id="cd00770">
    <property type="entry name" value="SerRS_core"/>
    <property type="match status" value="1"/>
</dbReference>
<dbReference type="Gene3D" id="3.30.930.10">
    <property type="entry name" value="Bira Bifunctional Protein, Domain 2"/>
    <property type="match status" value="1"/>
</dbReference>
<dbReference type="Gene3D" id="1.10.287.40">
    <property type="entry name" value="Serine-tRNA synthetase, tRNA binding domain"/>
    <property type="match status" value="1"/>
</dbReference>
<dbReference type="HAMAP" id="MF_00176">
    <property type="entry name" value="Ser_tRNA_synth_type1"/>
    <property type="match status" value="1"/>
</dbReference>
<dbReference type="InterPro" id="IPR002314">
    <property type="entry name" value="aa-tRNA-synt_IIb"/>
</dbReference>
<dbReference type="InterPro" id="IPR006195">
    <property type="entry name" value="aa-tRNA-synth_II"/>
</dbReference>
<dbReference type="InterPro" id="IPR045864">
    <property type="entry name" value="aa-tRNA-synth_II/BPL/LPL"/>
</dbReference>
<dbReference type="InterPro" id="IPR002317">
    <property type="entry name" value="Ser-tRNA-ligase_type_1"/>
</dbReference>
<dbReference type="InterPro" id="IPR015866">
    <property type="entry name" value="Ser-tRNA-synth_1_N"/>
</dbReference>
<dbReference type="InterPro" id="IPR042103">
    <property type="entry name" value="SerRS_1_N_sf"/>
</dbReference>
<dbReference type="InterPro" id="IPR033729">
    <property type="entry name" value="SerRS_core"/>
</dbReference>
<dbReference type="InterPro" id="IPR010978">
    <property type="entry name" value="tRNA-bd_arm"/>
</dbReference>
<dbReference type="NCBIfam" id="TIGR00414">
    <property type="entry name" value="serS"/>
    <property type="match status" value="1"/>
</dbReference>
<dbReference type="PANTHER" id="PTHR43697:SF1">
    <property type="entry name" value="SERINE--TRNA LIGASE"/>
    <property type="match status" value="1"/>
</dbReference>
<dbReference type="PANTHER" id="PTHR43697">
    <property type="entry name" value="SERYL-TRNA SYNTHETASE"/>
    <property type="match status" value="1"/>
</dbReference>
<dbReference type="Pfam" id="PF02403">
    <property type="entry name" value="Seryl_tRNA_N"/>
    <property type="match status" value="1"/>
</dbReference>
<dbReference type="Pfam" id="PF00587">
    <property type="entry name" value="tRNA-synt_2b"/>
    <property type="match status" value="1"/>
</dbReference>
<dbReference type="PIRSF" id="PIRSF001529">
    <property type="entry name" value="Ser-tRNA-synth_IIa"/>
    <property type="match status" value="1"/>
</dbReference>
<dbReference type="PRINTS" id="PR00981">
    <property type="entry name" value="TRNASYNTHSER"/>
</dbReference>
<dbReference type="SUPFAM" id="SSF55681">
    <property type="entry name" value="Class II aaRS and biotin synthetases"/>
    <property type="match status" value="1"/>
</dbReference>
<dbReference type="SUPFAM" id="SSF46589">
    <property type="entry name" value="tRNA-binding arm"/>
    <property type="match status" value="1"/>
</dbReference>
<dbReference type="PROSITE" id="PS50862">
    <property type="entry name" value="AA_TRNA_LIGASE_II"/>
    <property type="match status" value="1"/>
</dbReference>
<name>SYS_META1</name>
<organism>
    <name type="scientific">Metamycoplasma arthritidis (strain 158L3-1)</name>
    <name type="common">Mycoplasma arthritidis</name>
    <dbReference type="NCBI Taxonomy" id="243272"/>
    <lineage>
        <taxon>Bacteria</taxon>
        <taxon>Bacillati</taxon>
        <taxon>Mycoplasmatota</taxon>
        <taxon>Mycoplasmoidales</taxon>
        <taxon>Metamycoplasmataceae</taxon>
        <taxon>Metamycoplasma</taxon>
    </lineage>
</organism>
<gene>
    <name evidence="1" type="primary">serS</name>
    <name type="ordered locus">MARTH_orf851</name>
</gene>
<protein>
    <recommendedName>
        <fullName evidence="1">Serine--tRNA ligase</fullName>
        <ecNumber evidence="1">6.1.1.11</ecNumber>
    </recommendedName>
    <alternativeName>
        <fullName evidence="1">Seryl-tRNA synthetase</fullName>
        <shortName evidence="1">SerRS</shortName>
    </alternativeName>
    <alternativeName>
        <fullName evidence="1">Seryl-tRNA(Ser/Sec) synthetase</fullName>
    </alternativeName>
</protein>
<reference key="1">
    <citation type="journal article" date="2008" name="Infect. Immun.">
        <title>Genome of Mycoplasma arthritidis.</title>
        <authorList>
            <person name="Dybvig K."/>
            <person name="Zuhua C."/>
            <person name="Lao P."/>
            <person name="Jordan D.S."/>
            <person name="French C.T."/>
            <person name="Tu A.H."/>
            <person name="Loraine A.E."/>
        </authorList>
    </citation>
    <scope>NUCLEOTIDE SEQUENCE [LARGE SCALE GENOMIC DNA]</scope>
    <source>
        <strain>158L3-1</strain>
    </source>
</reference>
<sequence length="424" mass="48221">MLDLKFILNNKNEVIKKLSTRNYDLANITKINNLGEMRSKLIFELEKLQAKRNKLSDEIGIKKRNNENCDSLIEEVNAIKAQIEKVDHEADDIISQVNDILTKIPNLPYDDVPVGSDELDNKVIKEHASLGRGLVKGVEAHYDIATKLDIIDFTRAVKLAQTRFVLYKNAGAKLIRALANFMLDTHINNGYKEIMPAHLVNSKMLFGTGQLPKFKDDLFRVSDSDLWLIPTAEVPLTNYHYDEILNLNEPIKYVAYTKCFRSEAGSGGRDTRGIIRQHEFHKVELVKIVRQEDAMGEWEKMVNDAKNILTLLELPYREILLCTGDMGFSSAKTIDLEIWIPSEQRYRETSSISICKDFQARRAKIRYKDADGKTKYAFTMNGSGVAIDRVMAAILENYQNSDGTITVPKVLVPYMNGITKIEAK</sequence>
<feature type="chain" id="PRO_1000098095" description="Serine--tRNA ligase">
    <location>
        <begin position="1"/>
        <end position="424"/>
    </location>
</feature>
<feature type="binding site" evidence="1">
    <location>
        <begin position="231"/>
        <end position="233"/>
    </location>
    <ligand>
        <name>L-serine</name>
        <dbReference type="ChEBI" id="CHEBI:33384"/>
    </ligand>
</feature>
<feature type="binding site" evidence="1">
    <location>
        <begin position="261"/>
        <end position="263"/>
    </location>
    <ligand>
        <name>ATP</name>
        <dbReference type="ChEBI" id="CHEBI:30616"/>
    </ligand>
</feature>
<feature type="binding site" evidence="1">
    <location>
        <position position="284"/>
    </location>
    <ligand>
        <name>L-serine</name>
        <dbReference type="ChEBI" id="CHEBI:33384"/>
    </ligand>
</feature>
<feature type="binding site" evidence="1">
    <location>
        <begin position="348"/>
        <end position="351"/>
    </location>
    <ligand>
        <name>ATP</name>
        <dbReference type="ChEBI" id="CHEBI:30616"/>
    </ligand>
</feature>
<feature type="binding site" evidence="1">
    <location>
        <position position="383"/>
    </location>
    <ligand>
        <name>L-serine</name>
        <dbReference type="ChEBI" id="CHEBI:33384"/>
    </ligand>
</feature>